<feature type="chain" id="PRO_0000255632" description="DNA integrity scanning protein DisA">
    <location>
        <begin position="1"/>
        <end position="357"/>
    </location>
</feature>
<feature type="domain" description="DAC" evidence="2">
    <location>
        <begin position="8"/>
        <end position="146"/>
    </location>
</feature>
<feature type="binding site" evidence="1">
    <location>
        <position position="75"/>
    </location>
    <ligand>
        <name>ATP</name>
        <dbReference type="ChEBI" id="CHEBI:30616"/>
    </ligand>
</feature>
<feature type="binding site" evidence="1">
    <location>
        <position position="93"/>
    </location>
    <ligand>
        <name>ATP</name>
        <dbReference type="ChEBI" id="CHEBI:30616"/>
    </ligand>
</feature>
<feature type="binding site" evidence="1">
    <location>
        <begin position="106"/>
        <end position="110"/>
    </location>
    <ligand>
        <name>ATP</name>
        <dbReference type="ChEBI" id="CHEBI:30616"/>
    </ligand>
</feature>
<organism>
    <name type="scientific">Bacillus cereus (strain ATCC 10987 / NRS 248)</name>
    <dbReference type="NCBI Taxonomy" id="222523"/>
    <lineage>
        <taxon>Bacteria</taxon>
        <taxon>Bacillati</taxon>
        <taxon>Bacillota</taxon>
        <taxon>Bacilli</taxon>
        <taxon>Bacillales</taxon>
        <taxon>Bacillaceae</taxon>
        <taxon>Bacillus</taxon>
        <taxon>Bacillus cereus group</taxon>
    </lineage>
</organism>
<protein>
    <recommendedName>
        <fullName evidence="1">DNA integrity scanning protein DisA</fullName>
    </recommendedName>
    <alternativeName>
        <fullName evidence="1">Cyclic di-AMP synthase</fullName>
        <shortName evidence="1">c-di-AMP synthase</shortName>
    </alternativeName>
    <alternativeName>
        <fullName evidence="1">Diadenylate cyclase</fullName>
        <ecNumber evidence="1">2.7.7.85</ecNumber>
    </alternativeName>
</protein>
<dbReference type="EC" id="2.7.7.85" evidence="1"/>
<dbReference type="EMBL" id="AE017194">
    <property type="protein sequence ID" value="AAS39019.1"/>
    <property type="molecule type" value="Genomic_DNA"/>
</dbReference>
<dbReference type="SMR" id="Q73FC3"/>
<dbReference type="KEGG" id="bca:BCE_0083"/>
<dbReference type="HOGENOM" id="CLU_787128_0_0_9"/>
<dbReference type="Proteomes" id="UP000002527">
    <property type="component" value="Chromosome"/>
</dbReference>
<dbReference type="GO" id="GO:0004016">
    <property type="term" value="F:adenylate cyclase activity"/>
    <property type="evidence" value="ECO:0007669"/>
    <property type="project" value="TreeGrafter"/>
</dbReference>
<dbReference type="GO" id="GO:0005524">
    <property type="term" value="F:ATP binding"/>
    <property type="evidence" value="ECO:0007669"/>
    <property type="project" value="UniProtKB-UniRule"/>
</dbReference>
<dbReference type="GO" id="GO:0106408">
    <property type="term" value="F:diadenylate cyclase activity"/>
    <property type="evidence" value="ECO:0007669"/>
    <property type="project" value="UniProtKB-EC"/>
</dbReference>
<dbReference type="GO" id="GO:0003677">
    <property type="term" value="F:DNA binding"/>
    <property type="evidence" value="ECO:0007669"/>
    <property type="project" value="UniProtKB-UniRule"/>
</dbReference>
<dbReference type="GO" id="GO:0006281">
    <property type="term" value="P:DNA repair"/>
    <property type="evidence" value="ECO:0007669"/>
    <property type="project" value="UniProtKB-UniRule"/>
</dbReference>
<dbReference type="FunFam" id="1.10.150.20:FF:000023">
    <property type="entry name" value="DNA integrity scanning protein DisA"/>
    <property type="match status" value="1"/>
</dbReference>
<dbReference type="FunFam" id="1.20.1260.110:FF:000001">
    <property type="entry name" value="DNA integrity scanning protein DisA"/>
    <property type="match status" value="1"/>
</dbReference>
<dbReference type="FunFam" id="3.40.1700.10:FF:000001">
    <property type="entry name" value="DNA integrity scanning protein DisA"/>
    <property type="match status" value="1"/>
</dbReference>
<dbReference type="Gene3D" id="1.10.150.20">
    <property type="entry name" value="5' to 3' exonuclease, C-terminal subdomain"/>
    <property type="match status" value="1"/>
</dbReference>
<dbReference type="Gene3D" id="1.20.1260.110">
    <property type="entry name" value="DNA integrity scanning linker region"/>
    <property type="match status" value="1"/>
</dbReference>
<dbReference type="Gene3D" id="3.40.1700.10">
    <property type="entry name" value="DNA integrity scanning protein, DisA, N-terminal domain"/>
    <property type="match status" value="1"/>
</dbReference>
<dbReference type="HAMAP" id="MF_01438">
    <property type="entry name" value="DisA"/>
    <property type="match status" value="1"/>
</dbReference>
<dbReference type="InterPro" id="IPR050338">
    <property type="entry name" value="DisA"/>
</dbReference>
<dbReference type="InterPro" id="IPR038331">
    <property type="entry name" value="DisA_sf"/>
</dbReference>
<dbReference type="InterPro" id="IPR036888">
    <property type="entry name" value="DNA_integrity_DisA_N_sf"/>
</dbReference>
<dbReference type="InterPro" id="IPR018906">
    <property type="entry name" value="DNA_integrity_scan_DisA_link"/>
</dbReference>
<dbReference type="InterPro" id="IPR003390">
    <property type="entry name" value="DNA_integrity_scan_DisA_N"/>
</dbReference>
<dbReference type="InterPro" id="IPR023763">
    <property type="entry name" value="DNA_integrity_scanning_protein"/>
</dbReference>
<dbReference type="InterPro" id="IPR010994">
    <property type="entry name" value="RuvA_2-like"/>
</dbReference>
<dbReference type="NCBIfam" id="NF010009">
    <property type="entry name" value="PRK13482.1"/>
    <property type="match status" value="1"/>
</dbReference>
<dbReference type="PANTHER" id="PTHR34185">
    <property type="entry name" value="DIADENYLATE CYCLASE"/>
    <property type="match status" value="1"/>
</dbReference>
<dbReference type="PANTHER" id="PTHR34185:SF3">
    <property type="entry name" value="DNA INTEGRITY SCANNING PROTEIN DISA"/>
    <property type="match status" value="1"/>
</dbReference>
<dbReference type="Pfam" id="PF02457">
    <property type="entry name" value="DAC"/>
    <property type="match status" value="1"/>
</dbReference>
<dbReference type="Pfam" id="PF10635">
    <property type="entry name" value="DisA-linker"/>
    <property type="match status" value="1"/>
</dbReference>
<dbReference type="SUPFAM" id="SSF47781">
    <property type="entry name" value="RuvA domain 2-like"/>
    <property type="match status" value="1"/>
</dbReference>
<dbReference type="SUPFAM" id="SSF143597">
    <property type="entry name" value="YojJ-like"/>
    <property type="match status" value="1"/>
</dbReference>
<dbReference type="PROSITE" id="PS51794">
    <property type="entry name" value="DAC"/>
    <property type="match status" value="1"/>
</dbReference>
<comment type="function">
    <text evidence="1">Participates in a DNA-damage check-point that is active prior to asymmetric division when DNA is damaged. DisA forms globular foci that rapidly scan along the chromosomes during sporulation, searching for lesions. When a lesion is present, DisA pauses at the lesion site. This triggers a cellular response that culminates in a temporary block in sporulation initiation.</text>
</comment>
<comment type="function">
    <text evidence="1">Also has diadenylate cyclase activity, catalyzing the condensation of 2 ATP molecules into cyclic di-AMP (c-di-AMP). c-di-AMP acts as a signaling molecule that couples DNA integrity with progression of sporulation. The rise in c-di-AMP level generated by DisA while scanning the chromosome, operates as a positive signal that advances sporulation; upon encountering a lesion, the DisA focus arrests at the damaged site and halts c-di-AMP synthesis.</text>
</comment>
<comment type="catalytic activity">
    <reaction evidence="1">
        <text>2 ATP = 3',3'-c-di-AMP + 2 diphosphate</text>
        <dbReference type="Rhea" id="RHEA:35655"/>
        <dbReference type="ChEBI" id="CHEBI:30616"/>
        <dbReference type="ChEBI" id="CHEBI:33019"/>
        <dbReference type="ChEBI" id="CHEBI:71500"/>
        <dbReference type="EC" id="2.7.7.85"/>
    </reaction>
</comment>
<comment type="cofactor">
    <cofactor evidence="1">
        <name>Mg(2+)</name>
        <dbReference type="ChEBI" id="CHEBI:18420"/>
    </cofactor>
</comment>
<comment type="subunit">
    <text evidence="1">Homooctamer.</text>
</comment>
<comment type="similarity">
    <text evidence="1">Belongs to the DisA family.</text>
</comment>
<reference key="1">
    <citation type="journal article" date="2004" name="Nucleic Acids Res.">
        <title>The genome sequence of Bacillus cereus ATCC 10987 reveals metabolic adaptations and a large plasmid related to Bacillus anthracis pXO1.</title>
        <authorList>
            <person name="Rasko D.A."/>
            <person name="Ravel J."/>
            <person name="Oekstad O.A."/>
            <person name="Helgason E."/>
            <person name="Cer R.Z."/>
            <person name="Jiang L."/>
            <person name="Shores K.A."/>
            <person name="Fouts D.E."/>
            <person name="Tourasse N.J."/>
            <person name="Angiuoli S.V."/>
            <person name="Kolonay J.F."/>
            <person name="Nelson W.C."/>
            <person name="Kolstoe A.-B."/>
            <person name="Fraser C.M."/>
            <person name="Read T.D."/>
        </authorList>
    </citation>
    <scope>NUCLEOTIDE SEQUENCE [LARGE SCALE GENOMIC DNA]</scope>
    <source>
        <strain>ATCC 10987 / NRS 248</strain>
    </source>
</reference>
<proteinExistence type="inferred from homology"/>
<keyword id="KW-0067">ATP-binding</keyword>
<keyword id="KW-0227">DNA damage</keyword>
<keyword id="KW-0234">DNA repair</keyword>
<keyword id="KW-0238">DNA-binding</keyword>
<keyword id="KW-0460">Magnesium</keyword>
<keyword id="KW-0547">Nucleotide-binding</keyword>
<keyword id="KW-0548">Nucleotidyltransferase</keyword>
<keyword id="KW-0808">Transferase</keyword>
<evidence type="ECO:0000255" key="1">
    <source>
        <dbReference type="HAMAP-Rule" id="MF_01438"/>
    </source>
</evidence>
<evidence type="ECO:0000255" key="2">
    <source>
        <dbReference type="PROSITE-ProRule" id="PRU01130"/>
    </source>
</evidence>
<name>DISA_BACC1</name>
<accession>Q73FC3</accession>
<gene>
    <name evidence="1" type="primary">disA</name>
    <name type="ordered locus">BCE_0083</name>
</gene>
<sequence>MEENKQRVKSMINILQLVAPGTPLREGIDNVLRAQTGGLIVLGYNEQIKSIVDGGFHINCAFSPASLYELAKMDGALILNETGSKILIANAQLVPESSIDSIETGMRHRTAERVAKQTGSLVVAISQRRNVITLYQGNLRYTLKDIGVILTKANQAIQTLEKYKAVWNDGITNLGILEFEEVVTMSEVVHVLHSVEMVLRIKNEILSYIHELGTEGRLIRLQLTELLADLEAEAALLIKDYYQEKTQDHHQILKKLQELANTQLLEDSDLVKLLGYPGQTSLEESVTPRGYRITSKISRVPPLIIENLINRFKTLQGVCRATINELDDVEGIGEVRAKKIREGLKRIQEHLYMSRHN</sequence>